<organism>
    <name type="scientific">Xanthomonas euvesicatoria pv. vesicatoria (strain 85-10)</name>
    <name type="common">Xanthomonas campestris pv. vesicatoria</name>
    <dbReference type="NCBI Taxonomy" id="316273"/>
    <lineage>
        <taxon>Bacteria</taxon>
        <taxon>Pseudomonadati</taxon>
        <taxon>Pseudomonadota</taxon>
        <taxon>Gammaproteobacteria</taxon>
        <taxon>Lysobacterales</taxon>
        <taxon>Lysobacteraceae</taxon>
        <taxon>Xanthomonas</taxon>
    </lineage>
</organism>
<evidence type="ECO:0000255" key="1">
    <source>
        <dbReference type="HAMAP-Rule" id="MF_00600"/>
    </source>
</evidence>
<evidence type="ECO:0000256" key="2">
    <source>
        <dbReference type="SAM" id="MobiDB-lite"/>
    </source>
</evidence>
<reference key="1">
    <citation type="journal article" date="2005" name="J. Bacteriol.">
        <title>Insights into genome plasticity and pathogenicity of the plant pathogenic Bacterium Xanthomonas campestris pv. vesicatoria revealed by the complete genome sequence.</title>
        <authorList>
            <person name="Thieme F."/>
            <person name="Koebnik R."/>
            <person name="Bekel T."/>
            <person name="Berger C."/>
            <person name="Boch J."/>
            <person name="Buettner D."/>
            <person name="Caldana C."/>
            <person name="Gaigalat L."/>
            <person name="Goesmann A."/>
            <person name="Kay S."/>
            <person name="Kirchner O."/>
            <person name="Lanz C."/>
            <person name="Linke B."/>
            <person name="McHardy A.C."/>
            <person name="Meyer F."/>
            <person name="Mittenhuber G."/>
            <person name="Nies D.H."/>
            <person name="Niesbach-Kloesgen U."/>
            <person name="Patschkowski T."/>
            <person name="Rueckert C."/>
            <person name="Rupp O."/>
            <person name="Schneiker S."/>
            <person name="Schuster S.C."/>
            <person name="Vorhoelter F.J."/>
            <person name="Weber E."/>
            <person name="Puehler A."/>
            <person name="Bonas U."/>
            <person name="Bartels D."/>
            <person name="Kaiser O."/>
        </authorList>
    </citation>
    <scope>NUCLEOTIDE SEQUENCE [LARGE SCALE GENOMIC DNA]</scope>
    <source>
        <strain>85-10</strain>
    </source>
</reference>
<sequence length="546" mass="57198">MAAKDIRFGEDARTRMVRGVNVLANAVKATLGPKGRNVVLEKSFGAPTITKDGVSVAKEIELADKFENMGAQMVKEVASKTNDNAGDGTTTATVLAQALIREGAKAVAAGMNPMDLKRGIDQAVKAAVVELKNISKPTTDDKAIAQVGTISANSDESIGNIIAEAMKKVGKEGVITVEEGSGLENELDVVEGMQFDRGYLSPYFINNQQSQSADLDDPFILLHDKKISNVRDLLPVLEGVAKAGKPLLIVAEEVEGEALATLVVNTIRGIVKVVAVKAPGFGDRRKAMLEDMAVLTGGTVISEEVGLALEKATIKDLGRAKKVQVSKENTTIIDGAGDTAAIESRVGQIKTQIEDTSSDYDREKLQERVAKLAGGVAVIKVGASTEIEMKEKKARVEDALHATRAAVEEGVVPGGGVALVRALVAVGELKGANEDQTHGIQIALRAMEAPLREIVANAGEEPSVILNKVKEGSGNYGYNAANGEFGDMVEFGILDPTKVTRSALQNAASIAGLMITTEAMVADAPKKDEPAMPAGGGMGGMGGMDF</sequence>
<feature type="chain" id="PRO_0000257020" description="Chaperonin GroEL">
    <location>
        <begin position="1"/>
        <end position="546"/>
    </location>
</feature>
<feature type="region of interest" description="Disordered" evidence="2">
    <location>
        <begin position="526"/>
        <end position="546"/>
    </location>
</feature>
<feature type="compositionally biased region" description="Gly residues" evidence="2">
    <location>
        <begin position="534"/>
        <end position="546"/>
    </location>
</feature>
<feature type="binding site" evidence="1">
    <location>
        <begin position="30"/>
        <end position="33"/>
    </location>
    <ligand>
        <name>ATP</name>
        <dbReference type="ChEBI" id="CHEBI:30616"/>
    </ligand>
</feature>
<feature type="binding site" evidence="1">
    <location>
        <position position="51"/>
    </location>
    <ligand>
        <name>ATP</name>
        <dbReference type="ChEBI" id="CHEBI:30616"/>
    </ligand>
</feature>
<feature type="binding site" evidence="1">
    <location>
        <begin position="87"/>
        <end position="91"/>
    </location>
    <ligand>
        <name>ATP</name>
        <dbReference type="ChEBI" id="CHEBI:30616"/>
    </ligand>
</feature>
<feature type="binding site" evidence="1">
    <location>
        <position position="415"/>
    </location>
    <ligand>
        <name>ATP</name>
        <dbReference type="ChEBI" id="CHEBI:30616"/>
    </ligand>
</feature>
<feature type="binding site" evidence="1">
    <location>
        <begin position="479"/>
        <end position="481"/>
    </location>
    <ligand>
        <name>ATP</name>
        <dbReference type="ChEBI" id="CHEBI:30616"/>
    </ligand>
</feature>
<feature type="binding site" evidence="1">
    <location>
        <position position="495"/>
    </location>
    <ligand>
        <name>ATP</name>
        <dbReference type="ChEBI" id="CHEBI:30616"/>
    </ligand>
</feature>
<comment type="function">
    <text evidence="1">Together with its co-chaperonin GroES, plays an essential role in assisting protein folding. The GroEL-GroES system forms a nano-cage that allows encapsulation of the non-native substrate proteins and provides a physical environment optimized to promote and accelerate protein folding.</text>
</comment>
<comment type="catalytic activity">
    <reaction evidence="1">
        <text>ATP + H2O + a folded polypeptide = ADP + phosphate + an unfolded polypeptide.</text>
        <dbReference type="EC" id="5.6.1.7"/>
    </reaction>
</comment>
<comment type="subunit">
    <text evidence="1">Forms a cylinder of 14 subunits composed of two heptameric rings stacked back-to-back. Interacts with the co-chaperonin GroES.</text>
</comment>
<comment type="subcellular location">
    <subcellularLocation>
        <location evidence="1">Cytoplasm</location>
    </subcellularLocation>
</comment>
<comment type="similarity">
    <text evidence="1">Belongs to the chaperonin (HSP60) family.</text>
</comment>
<name>CH60_XANE5</name>
<protein>
    <recommendedName>
        <fullName evidence="1">Chaperonin GroEL</fullName>
        <ecNumber evidence="1">5.6.1.7</ecNumber>
    </recommendedName>
    <alternativeName>
        <fullName evidence="1">60 kDa chaperonin</fullName>
    </alternativeName>
    <alternativeName>
        <fullName evidence="1">Chaperonin-60</fullName>
        <shortName evidence="1">Cpn60</shortName>
    </alternativeName>
</protein>
<gene>
    <name evidence="1" type="primary">groEL</name>
    <name evidence="1" type="synonym">groL</name>
    <name type="ordered locus">XCV0571</name>
</gene>
<proteinExistence type="inferred from homology"/>
<keyword id="KW-0067">ATP-binding</keyword>
<keyword id="KW-0143">Chaperone</keyword>
<keyword id="KW-0963">Cytoplasm</keyword>
<keyword id="KW-0413">Isomerase</keyword>
<keyword id="KW-0547">Nucleotide-binding</keyword>
<dbReference type="EC" id="5.6.1.7" evidence="1"/>
<dbReference type="EMBL" id="AM039952">
    <property type="protein sequence ID" value="CAJ22202.1"/>
    <property type="molecule type" value="Genomic_DNA"/>
</dbReference>
<dbReference type="RefSeq" id="WP_011346211.1">
    <property type="nucleotide sequence ID" value="NZ_CP017190.1"/>
</dbReference>
<dbReference type="SMR" id="Q3BY61"/>
<dbReference type="STRING" id="456327.BJD11_19985"/>
<dbReference type="GeneID" id="97508926"/>
<dbReference type="KEGG" id="xcv:XCV0571"/>
<dbReference type="eggNOG" id="COG0459">
    <property type="taxonomic scope" value="Bacteria"/>
</dbReference>
<dbReference type="HOGENOM" id="CLU_016503_3_0_6"/>
<dbReference type="Proteomes" id="UP000007069">
    <property type="component" value="Chromosome"/>
</dbReference>
<dbReference type="GO" id="GO:0005737">
    <property type="term" value="C:cytoplasm"/>
    <property type="evidence" value="ECO:0007669"/>
    <property type="project" value="UniProtKB-SubCell"/>
</dbReference>
<dbReference type="GO" id="GO:0005524">
    <property type="term" value="F:ATP binding"/>
    <property type="evidence" value="ECO:0007669"/>
    <property type="project" value="UniProtKB-UniRule"/>
</dbReference>
<dbReference type="GO" id="GO:0140662">
    <property type="term" value="F:ATP-dependent protein folding chaperone"/>
    <property type="evidence" value="ECO:0007669"/>
    <property type="project" value="InterPro"/>
</dbReference>
<dbReference type="GO" id="GO:0016853">
    <property type="term" value="F:isomerase activity"/>
    <property type="evidence" value="ECO:0007669"/>
    <property type="project" value="UniProtKB-KW"/>
</dbReference>
<dbReference type="GO" id="GO:0051082">
    <property type="term" value="F:unfolded protein binding"/>
    <property type="evidence" value="ECO:0007669"/>
    <property type="project" value="UniProtKB-UniRule"/>
</dbReference>
<dbReference type="GO" id="GO:0042026">
    <property type="term" value="P:protein refolding"/>
    <property type="evidence" value="ECO:0007669"/>
    <property type="project" value="UniProtKB-UniRule"/>
</dbReference>
<dbReference type="CDD" id="cd03344">
    <property type="entry name" value="GroEL"/>
    <property type="match status" value="1"/>
</dbReference>
<dbReference type="FunFam" id="1.10.560.10:FF:000001">
    <property type="entry name" value="60 kDa chaperonin"/>
    <property type="match status" value="1"/>
</dbReference>
<dbReference type="FunFam" id="3.50.7.10:FF:000001">
    <property type="entry name" value="60 kDa chaperonin"/>
    <property type="match status" value="1"/>
</dbReference>
<dbReference type="Gene3D" id="3.50.7.10">
    <property type="entry name" value="GroEL"/>
    <property type="match status" value="1"/>
</dbReference>
<dbReference type="Gene3D" id="1.10.560.10">
    <property type="entry name" value="GroEL-like equatorial domain"/>
    <property type="match status" value="1"/>
</dbReference>
<dbReference type="Gene3D" id="3.30.260.10">
    <property type="entry name" value="TCP-1-like chaperonin intermediate domain"/>
    <property type="match status" value="1"/>
</dbReference>
<dbReference type="HAMAP" id="MF_00600">
    <property type="entry name" value="CH60"/>
    <property type="match status" value="1"/>
</dbReference>
<dbReference type="InterPro" id="IPR018370">
    <property type="entry name" value="Chaperonin_Cpn60_CS"/>
</dbReference>
<dbReference type="InterPro" id="IPR001844">
    <property type="entry name" value="Cpn60/GroEL"/>
</dbReference>
<dbReference type="InterPro" id="IPR002423">
    <property type="entry name" value="Cpn60/GroEL/TCP-1"/>
</dbReference>
<dbReference type="InterPro" id="IPR027409">
    <property type="entry name" value="GroEL-like_apical_dom_sf"/>
</dbReference>
<dbReference type="InterPro" id="IPR027413">
    <property type="entry name" value="GROEL-like_equatorial_sf"/>
</dbReference>
<dbReference type="InterPro" id="IPR027410">
    <property type="entry name" value="TCP-1-like_intermed_sf"/>
</dbReference>
<dbReference type="NCBIfam" id="TIGR02348">
    <property type="entry name" value="GroEL"/>
    <property type="match status" value="1"/>
</dbReference>
<dbReference type="NCBIfam" id="NF000592">
    <property type="entry name" value="PRK00013.1"/>
    <property type="match status" value="1"/>
</dbReference>
<dbReference type="NCBIfam" id="NF009487">
    <property type="entry name" value="PRK12849.1"/>
    <property type="match status" value="1"/>
</dbReference>
<dbReference type="NCBIfam" id="NF009488">
    <property type="entry name" value="PRK12850.1"/>
    <property type="match status" value="1"/>
</dbReference>
<dbReference type="NCBIfam" id="NF009489">
    <property type="entry name" value="PRK12851.1"/>
    <property type="match status" value="1"/>
</dbReference>
<dbReference type="PANTHER" id="PTHR45633">
    <property type="entry name" value="60 KDA HEAT SHOCK PROTEIN, MITOCHONDRIAL"/>
    <property type="match status" value="1"/>
</dbReference>
<dbReference type="Pfam" id="PF00118">
    <property type="entry name" value="Cpn60_TCP1"/>
    <property type="match status" value="1"/>
</dbReference>
<dbReference type="PRINTS" id="PR00298">
    <property type="entry name" value="CHAPERONIN60"/>
</dbReference>
<dbReference type="SUPFAM" id="SSF52029">
    <property type="entry name" value="GroEL apical domain-like"/>
    <property type="match status" value="1"/>
</dbReference>
<dbReference type="SUPFAM" id="SSF48592">
    <property type="entry name" value="GroEL equatorial domain-like"/>
    <property type="match status" value="1"/>
</dbReference>
<dbReference type="SUPFAM" id="SSF54849">
    <property type="entry name" value="GroEL-intermediate domain like"/>
    <property type="match status" value="1"/>
</dbReference>
<dbReference type="PROSITE" id="PS00296">
    <property type="entry name" value="CHAPERONINS_CPN60"/>
    <property type="match status" value="1"/>
</dbReference>
<accession>Q3BY61</accession>